<sequence>MKLTCVVIVAVLFLTANTFATADDPRNGLENLFLKAHHEMNPEASKLNERCLSGGEVCDFLFPKCCNYCILLFCS</sequence>
<name>O16A_CONVC</name>
<evidence type="ECO:0000250" key="1"/>
<evidence type="ECO:0000255" key="2"/>
<evidence type="ECO:0000269" key="3">
    <source>
    </source>
</evidence>
<evidence type="ECO:0000305" key="4"/>
<proteinExistence type="evidence at protein level"/>
<dbReference type="ConoServer" id="1400">
    <property type="toxin name" value="VcVIA precursor"/>
</dbReference>
<dbReference type="GO" id="GO:0005576">
    <property type="term" value="C:extracellular region"/>
    <property type="evidence" value="ECO:0007669"/>
    <property type="project" value="UniProtKB-SubCell"/>
</dbReference>
<dbReference type="GO" id="GO:0008200">
    <property type="term" value="F:ion channel inhibitor activity"/>
    <property type="evidence" value="ECO:0007669"/>
    <property type="project" value="InterPro"/>
</dbReference>
<dbReference type="GO" id="GO:0090729">
    <property type="term" value="F:toxin activity"/>
    <property type="evidence" value="ECO:0007669"/>
    <property type="project" value="UniProtKB-KW"/>
</dbReference>
<dbReference type="InterPro" id="IPR004214">
    <property type="entry name" value="Conotoxin"/>
</dbReference>
<dbReference type="Pfam" id="PF02950">
    <property type="entry name" value="Conotoxin"/>
    <property type="match status" value="1"/>
</dbReference>
<keyword id="KW-1015">Disulfide bond</keyword>
<keyword id="KW-0872">Ion channel impairing toxin</keyword>
<keyword id="KW-0960">Knottin</keyword>
<keyword id="KW-0528">Neurotoxin</keyword>
<keyword id="KW-0964">Secreted</keyword>
<keyword id="KW-0732">Signal</keyword>
<keyword id="KW-0800">Toxin</keyword>
<feature type="signal peptide" evidence="2">
    <location>
        <begin position="1"/>
        <end position="22"/>
    </location>
</feature>
<feature type="propeptide" id="PRO_0000034966" evidence="1">
    <location>
        <begin position="23"/>
        <end position="49"/>
    </location>
</feature>
<feature type="peptide" id="PRO_0000034967" description="Conotoxin Vc6a">
    <location>
        <begin position="51"/>
        <end position="75"/>
    </location>
</feature>
<feature type="disulfide bond" evidence="1">
    <location>
        <begin position="51"/>
        <end position="66"/>
    </location>
</feature>
<feature type="disulfide bond" evidence="1">
    <location>
        <begin position="58"/>
        <end position="69"/>
    </location>
</feature>
<feature type="disulfide bond" evidence="1">
    <location>
        <begin position="65"/>
        <end position="74"/>
    </location>
</feature>
<organism>
    <name type="scientific">Conus victoriae</name>
    <name type="common">Queen Victoria cone</name>
    <dbReference type="NCBI Taxonomy" id="319920"/>
    <lineage>
        <taxon>Eukaryota</taxon>
        <taxon>Metazoa</taxon>
        <taxon>Spiralia</taxon>
        <taxon>Lophotrochozoa</taxon>
        <taxon>Mollusca</taxon>
        <taxon>Gastropoda</taxon>
        <taxon>Caenogastropoda</taxon>
        <taxon>Neogastropoda</taxon>
        <taxon>Conoidea</taxon>
        <taxon>Conidae</taxon>
        <taxon>Conus</taxon>
        <taxon>Cylinder</taxon>
    </lineage>
</organism>
<comment type="subcellular location">
    <subcellularLocation>
        <location>Secreted</location>
    </subcellularLocation>
</comment>
<comment type="tissue specificity">
    <text>Expressed by the venom duct.</text>
</comment>
<comment type="domain">
    <text evidence="1">The presence of a 'disulfide through disulfide knot' structurally defines this protein as a knottin.</text>
</comment>
<comment type="domain">
    <text>The cysteine framework is VI/VII (C-C-CC-C-C).</text>
</comment>
<comment type="mass spectrometry"/>
<comment type="similarity">
    <text evidence="4">Belongs to the conotoxin O1 superfamily.</text>
</comment>
<reference key="1">
    <citation type="journal article" date="2004" name="J. Mass Spectrom.">
        <title>Determining sequences and post-translational modifications of novel conotoxins in Conus victoriae using cDNA sequencing and mass spectrometry.</title>
        <authorList>
            <person name="Jakubowski J.A."/>
            <person name="Keays D.A."/>
            <person name="Kelley W.P."/>
            <person name="Sandall D.W."/>
            <person name="Bingham J.-P."/>
            <person name="Livett B.G."/>
            <person name="Gayler K.R."/>
            <person name="Sweedler J.V."/>
        </authorList>
    </citation>
    <scope>NUCLEOTIDE SEQUENCE [MRNA]</scope>
    <scope>MASS SPECTROMETRY</scope>
    <source>
        <tissue>Venom</tissue>
        <tissue>Venom duct</tissue>
    </source>
</reference>
<protein>
    <recommendedName>
        <fullName>Conotoxin Vc6a</fullName>
    </recommendedName>
    <alternativeName>
        <fullName>Vc6.1</fullName>
    </alternativeName>
</protein>
<accession>P69758</accession>